<accession>Q9FHA2</accession>
<accession>A8MRE6</accession>
<accession>A8MS60</accession>
<dbReference type="EMBL" id="AB020742">
    <property type="protein sequence ID" value="BAB10945.1"/>
    <property type="molecule type" value="Genomic_DNA"/>
</dbReference>
<dbReference type="EMBL" id="CP002688">
    <property type="protein sequence ID" value="AED98301.1"/>
    <property type="molecule type" value="Genomic_DNA"/>
</dbReference>
<dbReference type="EMBL" id="CP002688">
    <property type="protein sequence ID" value="AED98302.1"/>
    <property type="molecule type" value="Genomic_DNA"/>
</dbReference>
<dbReference type="EMBL" id="CP002688">
    <property type="protein sequence ID" value="AED98303.1"/>
    <property type="molecule type" value="Genomic_DNA"/>
</dbReference>
<dbReference type="EMBL" id="BT028946">
    <property type="protein sequence ID" value="ABI49493.1"/>
    <property type="molecule type" value="mRNA"/>
</dbReference>
<dbReference type="EMBL" id="AF488605">
    <property type="status" value="NOT_ANNOTATED_CDS"/>
    <property type="molecule type" value="mRNA"/>
</dbReference>
<dbReference type="RefSeq" id="NP_001078810.1">
    <molecule id="Q9FHA2-3"/>
    <property type="nucleotide sequence ID" value="NM_001085341.1"/>
</dbReference>
<dbReference type="RefSeq" id="NP_001078811.1">
    <molecule id="Q9FHA2-2"/>
    <property type="nucleotide sequence ID" value="NM_001085342.1"/>
</dbReference>
<dbReference type="RefSeq" id="NP_201512.1">
    <molecule id="Q9FHA2-1"/>
    <property type="nucleotide sequence ID" value="NM_126111.4"/>
</dbReference>
<dbReference type="SMR" id="Q9FHA2"/>
<dbReference type="BioGRID" id="22088">
    <property type="interactions" value="16"/>
</dbReference>
<dbReference type="FunCoup" id="Q9FHA2">
    <property type="interactions" value="50"/>
</dbReference>
<dbReference type="IntAct" id="Q9FHA2">
    <property type="interactions" value="12"/>
</dbReference>
<dbReference type="STRING" id="3702.Q9FHA2"/>
<dbReference type="PaxDb" id="3702-AT5G67110.1"/>
<dbReference type="ProteomicsDB" id="245015">
    <molecule id="Q9FHA2-1"/>
</dbReference>
<dbReference type="EnsemblPlants" id="AT5G67110.1">
    <molecule id="Q9FHA2-1"/>
    <property type="protein sequence ID" value="AT5G67110.1"/>
    <property type="gene ID" value="AT5G67110"/>
</dbReference>
<dbReference type="EnsemblPlants" id="AT5G67110.2">
    <molecule id="Q9FHA2-3"/>
    <property type="protein sequence ID" value="AT5G67110.2"/>
    <property type="gene ID" value="AT5G67110"/>
</dbReference>
<dbReference type="EnsemblPlants" id="AT5G67110.3">
    <molecule id="Q9FHA2-2"/>
    <property type="protein sequence ID" value="AT5G67110.3"/>
    <property type="gene ID" value="AT5G67110"/>
</dbReference>
<dbReference type="GeneID" id="836846"/>
<dbReference type="Gramene" id="AT5G67110.1">
    <molecule id="Q9FHA2-1"/>
    <property type="protein sequence ID" value="AT5G67110.1"/>
    <property type="gene ID" value="AT5G67110"/>
</dbReference>
<dbReference type="Gramene" id="AT5G67110.2">
    <molecule id="Q9FHA2-3"/>
    <property type="protein sequence ID" value="AT5G67110.2"/>
    <property type="gene ID" value="AT5G67110"/>
</dbReference>
<dbReference type="Gramene" id="AT5G67110.3">
    <molecule id="Q9FHA2-2"/>
    <property type="protein sequence ID" value="AT5G67110.3"/>
    <property type="gene ID" value="AT5G67110"/>
</dbReference>
<dbReference type="KEGG" id="ath:AT5G67110"/>
<dbReference type="Araport" id="AT5G67110"/>
<dbReference type="TAIR" id="AT5G67110">
    <property type="gene designation" value="ALC"/>
</dbReference>
<dbReference type="eggNOG" id="ENOG502QVNY">
    <property type="taxonomic scope" value="Eukaryota"/>
</dbReference>
<dbReference type="HOGENOM" id="CLU_1333564_0_0_1"/>
<dbReference type="InParanoid" id="Q9FHA2"/>
<dbReference type="OMA" id="HSMANHE"/>
<dbReference type="OrthoDB" id="690068at2759"/>
<dbReference type="PhylomeDB" id="Q9FHA2"/>
<dbReference type="PRO" id="PR:Q9FHA2"/>
<dbReference type="Proteomes" id="UP000006548">
    <property type="component" value="Chromosome 5"/>
</dbReference>
<dbReference type="ExpressionAtlas" id="Q9FHA2">
    <property type="expression patterns" value="baseline and differential"/>
</dbReference>
<dbReference type="GO" id="GO:0005634">
    <property type="term" value="C:nucleus"/>
    <property type="evidence" value="ECO:0000314"/>
    <property type="project" value="TAIR"/>
</dbReference>
<dbReference type="GO" id="GO:0003677">
    <property type="term" value="F:DNA binding"/>
    <property type="evidence" value="ECO:0007669"/>
    <property type="project" value="UniProtKB-KW"/>
</dbReference>
<dbReference type="GO" id="GO:0003700">
    <property type="term" value="F:DNA-binding transcription factor activity"/>
    <property type="evidence" value="ECO:0000315"/>
    <property type="project" value="TAIR"/>
</dbReference>
<dbReference type="GO" id="GO:0046983">
    <property type="term" value="F:protein dimerization activity"/>
    <property type="evidence" value="ECO:0007669"/>
    <property type="project" value="InterPro"/>
</dbReference>
<dbReference type="GO" id="GO:0010047">
    <property type="term" value="P:fruit dehiscence"/>
    <property type="evidence" value="ECO:0000315"/>
    <property type="project" value="TAIR"/>
</dbReference>
<dbReference type="CDD" id="cd11445">
    <property type="entry name" value="bHLH_AtPIF_like"/>
    <property type="match status" value="1"/>
</dbReference>
<dbReference type="FunFam" id="4.10.280.10:FF:000004">
    <property type="entry name" value="Basic helix-loop-helix transcription factor"/>
    <property type="match status" value="1"/>
</dbReference>
<dbReference type="Gene3D" id="4.10.280.10">
    <property type="entry name" value="Helix-loop-helix DNA-binding domain"/>
    <property type="match status" value="1"/>
</dbReference>
<dbReference type="InterPro" id="IPR031066">
    <property type="entry name" value="bHLH_ALC-like_plant"/>
</dbReference>
<dbReference type="InterPro" id="IPR011598">
    <property type="entry name" value="bHLH_dom"/>
</dbReference>
<dbReference type="InterPro" id="IPR036638">
    <property type="entry name" value="HLH_DNA-bd_sf"/>
</dbReference>
<dbReference type="InterPro" id="IPR047265">
    <property type="entry name" value="PIF1-like_bHLH"/>
</dbReference>
<dbReference type="PANTHER" id="PTHR45855:SF6">
    <property type="entry name" value="TRANSCRIPTION FACTOR ALC"/>
    <property type="match status" value="1"/>
</dbReference>
<dbReference type="PANTHER" id="PTHR45855">
    <property type="entry name" value="TRANSCRIPTION FACTOR PIF1-RELATED"/>
    <property type="match status" value="1"/>
</dbReference>
<dbReference type="Pfam" id="PF00010">
    <property type="entry name" value="HLH"/>
    <property type="match status" value="1"/>
</dbReference>
<dbReference type="SMART" id="SM00353">
    <property type="entry name" value="HLH"/>
    <property type="match status" value="1"/>
</dbReference>
<dbReference type="SUPFAM" id="SSF47459">
    <property type="entry name" value="HLH, helix-loop-helix DNA-binding domain"/>
    <property type="match status" value="1"/>
</dbReference>
<dbReference type="PROSITE" id="PS50888">
    <property type="entry name" value="BHLH"/>
    <property type="match status" value="1"/>
</dbReference>
<protein>
    <recommendedName>
        <fullName>Transcription factor ALC</fullName>
    </recommendedName>
    <alternativeName>
        <fullName>Basic helix-loop-helix protein 73</fullName>
        <shortName>AtbHLH73</shortName>
        <shortName>bHLH 73</shortName>
    </alternativeName>
    <alternativeName>
        <fullName>Protein ALCATRAZ</fullName>
    </alternativeName>
    <alternativeName>
        <fullName>Transcription factor EN 98</fullName>
    </alternativeName>
    <alternativeName>
        <fullName>bHLH transcription factor bHLH073</fullName>
    </alternativeName>
</protein>
<feature type="chain" id="PRO_0000358839" description="Transcription factor ALC">
    <location>
        <begin position="1"/>
        <end position="210"/>
    </location>
</feature>
<feature type="domain" description="bHLH" evidence="1">
    <location>
        <begin position="93"/>
        <end position="142"/>
    </location>
</feature>
<feature type="region of interest" description="Disordered" evidence="2">
    <location>
        <begin position="1"/>
        <end position="49"/>
    </location>
</feature>
<feature type="compositionally biased region" description="Polar residues" evidence="2">
    <location>
        <begin position="27"/>
        <end position="48"/>
    </location>
</feature>
<feature type="splice variant" id="VSP_036108" description="In isoform 2." evidence="5">
    <location>
        <begin position="104"/>
        <end position="125"/>
    </location>
</feature>
<feature type="splice variant" id="VSP_036109" description="In isoform 3." evidence="5">
    <original>TDKASMLDEAIEYLKQLQLQVQTLAVMNGLGLNPMRLPQVPPPTHTRINETLEQDLNLETLLAAPHSLEPAKTSQGMCFSTATLL</original>
    <variation>VNQSLFESEIVRNIVLIDPLSFVCL</variation>
    <location>
        <begin position="126"/>
        <end position="210"/>
    </location>
</feature>
<reference key="1">
    <citation type="journal article" date="2000" name="DNA Res.">
        <title>Structural analysis of Arabidopsis thaliana chromosome 5. X. Sequence features of the regions of 3,076,755 bp covered by sixty P1 and TAC clones.</title>
        <authorList>
            <person name="Sato S."/>
            <person name="Nakamura Y."/>
            <person name="Kaneko T."/>
            <person name="Katoh T."/>
            <person name="Asamizu E."/>
            <person name="Kotani H."/>
            <person name="Tabata S."/>
        </authorList>
    </citation>
    <scope>NUCLEOTIDE SEQUENCE [LARGE SCALE GENOMIC DNA]</scope>
    <source>
        <strain>cv. Columbia</strain>
    </source>
</reference>
<reference key="2">
    <citation type="journal article" date="2017" name="Plant J.">
        <title>Araport11: a complete reannotation of the Arabidopsis thaliana reference genome.</title>
        <authorList>
            <person name="Cheng C.Y."/>
            <person name="Krishnakumar V."/>
            <person name="Chan A.P."/>
            <person name="Thibaud-Nissen F."/>
            <person name="Schobel S."/>
            <person name="Town C.D."/>
        </authorList>
    </citation>
    <scope>GENOME REANNOTATION</scope>
    <source>
        <strain>cv. Columbia</strain>
    </source>
</reference>
<reference key="3">
    <citation type="submission" date="2006-09" db="EMBL/GenBank/DDBJ databases">
        <title>Arabidopsis ORF clones.</title>
        <authorList>
            <person name="Quinitio C."/>
            <person name="Chen H."/>
            <person name="Kim C.J."/>
            <person name="Shinn P."/>
            <person name="Ecker J.R."/>
        </authorList>
    </citation>
    <scope>NUCLEOTIDE SEQUENCE [LARGE SCALE MRNA] (ISOFORM 1)</scope>
    <source>
        <strain>cv. Columbia</strain>
    </source>
</reference>
<reference key="4">
    <citation type="journal article" date="2003" name="Mol. Biol. Evol.">
        <title>The basic helix-loop-helix transcription factor family in plants: a genome-wide study of protein structure and functional diversity.</title>
        <authorList>
            <person name="Heim M.A."/>
            <person name="Jakoby M."/>
            <person name="Werber M."/>
            <person name="Martin C."/>
            <person name="Weisshaar B."/>
            <person name="Bailey P.C."/>
        </authorList>
    </citation>
    <scope>NUCLEOTIDE SEQUENCE [MRNA] OF 115-210 (ISOFORMS 1/2)</scope>
    <scope>TISSUE SPECIFICITY</scope>
    <scope>GENE FAMILY</scope>
    <scope>NOMENCLATURE</scope>
    <source>
        <strain>cv. Columbia</strain>
    </source>
</reference>
<reference key="5">
    <citation type="journal article" date="2001" name="Curr. Biol.">
        <title>The Arabidopsis myc/bHLH gene ALCATRAZ enables cell separation in fruit dehiscence.</title>
        <authorList>
            <person name="Rajani S."/>
            <person name="Sundaresan V."/>
        </authorList>
    </citation>
    <scope>FUNCTION</scope>
    <scope>TISSUE SPECIFICITY</scope>
</reference>
<reference key="6">
    <citation type="journal article" date="2003" name="Plant Cell">
        <title>The Arabidopsis basic/helix-loop-helix transcription factor family.</title>
        <authorList>
            <person name="Toledo-Ortiz G."/>
            <person name="Huq E."/>
            <person name="Quail P.H."/>
        </authorList>
    </citation>
    <scope>GENE FAMILY</scope>
</reference>
<reference key="7">
    <citation type="journal article" date="2003" name="Plant Cell">
        <title>Update on the basic helix-loop-helix transcription factor gene family in Arabidopsis thaliana.</title>
        <authorList>
            <person name="Bailey P.C."/>
            <person name="Martin C."/>
            <person name="Toledo-Ortiz G."/>
            <person name="Quail P.H."/>
            <person name="Huq E."/>
            <person name="Heim M.A."/>
            <person name="Jakoby M."/>
            <person name="Werber M."/>
            <person name="Weisshaar B."/>
        </authorList>
    </citation>
    <scope>GENE FAMILY</scope>
    <scope>NOMENCLATURE</scope>
</reference>
<comment type="function">
    <text evidence="3">Required for the dehiscence of fruit, especially for the separation of the valve cells from the replum. Promotes the differentiation of a strip of labile nonlignified cells sandwiched between layers of lignified cells.</text>
</comment>
<comment type="subunit">
    <text evidence="5">Homodimer.</text>
</comment>
<comment type="subcellular location">
    <subcellularLocation>
        <location evidence="1">Nucleus</location>
    </subcellularLocation>
</comment>
<comment type="alternative products">
    <event type="alternative splicing"/>
    <isoform>
        <id>Q9FHA2-1</id>
        <name>1</name>
        <sequence type="displayed"/>
    </isoform>
    <isoform>
        <id>Q9FHA2-2</id>
        <name>2</name>
        <sequence type="described" ref="VSP_036108"/>
    </isoform>
    <isoform>
        <id>Q9FHA2-3</id>
        <name>3</name>
        <sequence type="described" ref="VSP_036109"/>
    </isoform>
</comment>
<comment type="tissue specificity">
    <text evidence="3 4">Expressed constitutively in roots, leaves, stems, and flowers. Confined to the valve margins of the silique.</text>
</comment>
<proteinExistence type="evidence at transcript level"/>
<organism>
    <name type="scientific">Arabidopsis thaliana</name>
    <name type="common">Mouse-ear cress</name>
    <dbReference type="NCBI Taxonomy" id="3702"/>
    <lineage>
        <taxon>Eukaryota</taxon>
        <taxon>Viridiplantae</taxon>
        <taxon>Streptophyta</taxon>
        <taxon>Embryophyta</taxon>
        <taxon>Tracheophyta</taxon>
        <taxon>Spermatophyta</taxon>
        <taxon>Magnoliopsida</taxon>
        <taxon>eudicotyledons</taxon>
        <taxon>Gunneridae</taxon>
        <taxon>Pentapetalae</taxon>
        <taxon>rosids</taxon>
        <taxon>malvids</taxon>
        <taxon>Brassicales</taxon>
        <taxon>Brassicaceae</taxon>
        <taxon>Camelineae</taxon>
        <taxon>Arabidopsis</taxon>
    </lineage>
</organism>
<gene>
    <name type="primary">ALC</name>
    <name type="synonym">BHLH73</name>
    <name type="synonym">EN98</name>
    <name type="ordered locus">At5g67110</name>
    <name type="ORF">K21H1.7</name>
</gene>
<name>ALC_ARATH</name>
<sequence>MGDSDVGDRLPPPSSSDELSSFLRQILSRTPTAQPSSPPKSTNVSSAETFFPSVSGGAVSSVGYGVSETGQDKYAFEHKRSGAKQRNSLKRNIDAQFHNLSEKKRRSKINEKMKALQKLIPNSNKTDKASMLDEAIEYLKQLQLQVQTLAVMNGLGLNPMRLPQVPPPTHTRINETLEQDLNLETLLAAPHSLEPAKTSQGMCFSTATLL</sequence>
<keyword id="KW-0025">Alternative splicing</keyword>
<keyword id="KW-0238">DNA-binding</keyword>
<keyword id="KW-0539">Nucleus</keyword>
<keyword id="KW-1185">Reference proteome</keyword>
<keyword id="KW-0804">Transcription</keyword>
<keyword id="KW-0805">Transcription regulation</keyword>
<evidence type="ECO:0000255" key="1">
    <source>
        <dbReference type="PROSITE-ProRule" id="PRU00981"/>
    </source>
</evidence>
<evidence type="ECO:0000256" key="2">
    <source>
        <dbReference type="SAM" id="MobiDB-lite"/>
    </source>
</evidence>
<evidence type="ECO:0000269" key="3">
    <source>
    </source>
</evidence>
<evidence type="ECO:0000269" key="4">
    <source>
    </source>
</evidence>
<evidence type="ECO:0000305" key="5"/>